<keyword id="KW-0002">3D-structure</keyword>
<keyword id="KW-1185">Reference proteome</keyword>
<accession>O27953</accession>
<sequence length="92" mass="10521">MPAYVFSKESFLKFLEGHLEDDVVVVVSSDVTDFCKKLSESMVGEKEYCFAEFAFPADIFDADEDEIDEMMKYAIVFVEKEKLSEAGRNAIR</sequence>
<feature type="chain" id="PRO_0000128137" description="Uncharacterized protein AF_2331">
    <location>
        <begin position="1"/>
        <end position="92"/>
    </location>
</feature>
<feature type="strand" evidence="1">
    <location>
        <begin position="4"/>
        <end position="6"/>
    </location>
</feature>
<feature type="helix" evidence="1">
    <location>
        <begin position="8"/>
        <end position="18"/>
    </location>
</feature>
<feature type="strand" evidence="1">
    <location>
        <begin position="23"/>
        <end position="28"/>
    </location>
</feature>
<feature type="strand" evidence="1">
    <location>
        <begin position="31"/>
        <end position="39"/>
    </location>
</feature>
<feature type="strand" evidence="1">
    <location>
        <begin position="46"/>
        <end position="57"/>
    </location>
</feature>
<feature type="strand" evidence="1">
    <location>
        <begin position="60"/>
        <end position="62"/>
    </location>
</feature>
<feature type="helix" evidence="1">
    <location>
        <begin position="64"/>
        <end position="69"/>
    </location>
</feature>
<feature type="strand" evidence="1">
    <location>
        <begin position="72"/>
        <end position="79"/>
    </location>
</feature>
<feature type="helix" evidence="1">
    <location>
        <begin position="80"/>
        <end position="82"/>
    </location>
</feature>
<feature type="helix" evidence="1">
    <location>
        <begin position="85"/>
        <end position="89"/>
    </location>
</feature>
<evidence type="ECO:0007829" key="1">
    <source>
        <dbReference type="PDB" id="2FDO"/>
    </source>
</evidence>
<reference key="1">
    <citation type="journal article" date="1997" name="Nature">
        <title>The complete genome sequence of the hyperthermophilic, sulphate-reducing archaeon Archaeoglobus fulgidus.</title>
        <authorList>
            <person name="Klenk H.-P."/>
            <person name="Clayton R.A."/>
            <person name="Tomb J.-F."/>
            <person name="White O."/>
            <person name="Nelson K.E."/>
            <person name="Ketchum K.A."/>
            <person name="Dodson R.J."/>
            <person name="Gwinn M.L."/>
            <person name="Hickey E.K."/>
            <person name="Peterson J.D."/>
            <person name="Richardson D.L."/>
            <person name="Kerlavage A.R."/>
            <person name="Graham D.E."/>
            <person name="Kyrpides N.C."/>
            <person name="Fleischmann R.D."/>
            <person name="Quackenbush J."/>
            <person name="Lee N.H."/>
            <person name="Sutton G.G."/>
            <person name="Gill S.R."/>
            <person name="Kirkness E.F."/>
            <person name="Dougherty B.A."/>
            <person name="McKenney K."/>
            <person name="Adams M.D."/>
            <person name="Loftus B.J."/>
            <person name="Peterson S.N."/>
            <person name="Reich C.I."/>
            <person name="McNeil L.K."/>
            <person name="Badger J.H."/>
            <person name="Glodek A."/>
            <person name="Zhou L."/>
            <person name="Overbeek R."/>
            <person name="Gocayne J.D."/>
            <person name="Weidman J.F."/>
            <person name="McDonald L.A."/>
            <person name="Utterback T.R."/>
            <person name="Cotton M.D."/>
            <person name="Spriggs T."/>
            <person name="Artiach P."/>
            <person name="Kaine B.P."/>
            <person name="Sykes S.M."/>
            <person name="Sadow P.W."/>
            <person name="D'Andrea K.P."/>
            <person name="Bowman C."/>
            <person name="Fujii C."/>
            <person name="Garland S.A."/>
            <person name="Mason T.M."/>
            <person name="Olsen G.J."/>
            <person name="Fraser C.M."/>
            <person name="Smith H.O."/>
            <person name="Woese C.R."/>
            <person name="Venter J.C."/>
        </authorList>
    </citation>
    <scope>NUCLEOTIDE SEQUENCE [LARGE SCALE GENOMIC DNA]</scope>
    <source>
        <strain>ATCC 49558 / DSM 4304 / JCM 9628 / NBRC 100126 / VC-16</strain>
    </source>
</reference>
<proteinExistence type="evidence at protein level"/>
<gene>
    <name type="ordered locus">AF_2331</name>
</gene>
<organism>
    <name type="scientific">Archaeoglobus fulgidus (strain ATCC 49558 / DSM 4304 / JCM 9628 / NBRC 100126 / VC-16)</name>
    <dbReference type="NCBI Taxonomy" id="224325"/>
    <lineage>
        <taxon>Archaea</taxon>
        <taxon>Methanobacteriati</taxon>
        <taxon>Methanobacteriota</taxon>
        <taxon>Archaeoglobi</taxon>
        <taxon>Archaeoglobales</taxon>
        <taxon>Archaeoglobaceae</taxon>
        <taxon>Archaeoglobus</taxon>
    </lineage>
</organism>
<dbReference type="EMBL" id="AE000782">
    <property type="protein sequence ID" value="AAB88923.1"/>
    <property type="molecule type" value="Genomic_DNA"/>
</dbReference>
<dbReference type="PIR" id="C69541">
    <property type="entry name" value="C69541"/>
</dbReference>
<dbReference type="RefSeq" id="WP_010879820.1">
    <property type="nucleotide sequence ID" value="NC_000917.1"/>
</dbReference>
<dbReference type="PDB" id="2FDO">
    <property type="method" value="X-ray"/>
    <property type="resolution" value="2.40 A"/>
    <property type="chains" value="A/B=1-92"/>
</dbReference>
<dbReference type="PDBsum" id="2FDO"/>
<dbReference type="SMR" id="O27953"/>
<dbReference type="STRING" id="224325.AF_2331"/>
<dbReference type="PaxDb" id="224325-AF_2331"/>
<dbReference type="EnsemblBacteria" id="AAB88923">
    <property type="protein sequence ID" value="AAB88923"/>
    <property type="gene ID" value="AF_2331"/>
</dbReference>
<dbReference type="GeneID" id="1485563"/>
<dbReference type="KEGG" id="afu:AF_2331"/>
<dbReference type="eggNOG" id="arCOG10399">
    <property type="taxonomic scope" value="Archaea"/>
</dbReference>
<dbReference type="HOGENOM" id="CLU_2353077_0_0_2"/>
<dbReference type="EvolutionaryTrace" id="O27953"/>
<dbReference type="Proteomes" id="UP000002199">
    <property type="component" value="Chromosome"/>
</dbReference>
<dbReference type="Gene3D" id="3.30.1970.10">
    <property type="entry name" value="AF2331-like"/>
    <property type="match status" value="1"/>
</dbReference>
<dbReference type="InterPro" id="IPR028986">
    <property type="entry name" value="AF2331-like_dom"/>
</dbReference>
<dbReference type="InterPro" id="IPR036842">
    <property type="entry name" value="AF2331-like_sf"/>
</dbReference>
<dbReference type="Pfam" id="PF14556">
    <property type="entry name" value="AF2331-like"/>
    <property type="match status" value="1"/>
</dbReference>
<dbReference type="SUPFAM" id="SSF143995">
    <property type="entry name" value="AF2331-like"/>
    <property type="match status" value="1"/>
</dbReference>
<protein>
    <recommendedName>
        <fullName>Uncharacterized protein AF_2331</fullName>
    </recommendedName>
</protein>
<name>Y2331_ARCFU</name>